<gene>
    <name evidence="1" type="primary">ihfA</name>
    <name evidence="1" type="synonym">himA</name>
    <name type="ordered locus">YPTS_2410</name>
</gene>
<sequence>MALTKAEMSEHLFEKLGLSKRDAKDLVELFFEEVRRALENGEQVKLSGFGNFDLRDKNQRPGRNPKTGEDIPITARRVVTFRPGQKLKSRVESATPKE</sequence>
<name>IHFA_YERPB</name>
<evidence type="ECO:0000255" key="1">
    <source>
        <dbReference type="HAMAP-Rule" id="MF_00380"/>
    </source>
</evidence>
<evidence type="ECO:0000256" key="2">
    <source>
        <dbReference type="SAM" id="MobiDB-lite"/>
    </source>
</evidence>
<reference key="1">
    <citation type="submission" date="2008-04" db="EMBL/GenBank/DDBJ databases">
        <title>Complete sequence of Yersinia pseudotuberculosis PB1/+.</title>
        <authorList>
            <person name="Copeland A."/>
            <person name="Lucas S."/>
            <person name="Lapidus A."/>
            <person name="Glavina del Rio T."/>
            <person name="Dalin E."/>
            <person name="Tice H."/>
            <person name="Bruce D."/>
            <person name="Goodwin L."/>
            <person name="Pitluck S."/>
            <person name="Munk A.C."/>
            <person name="Brettin T."/>
            <person name="Detter J.C."/>
            <person name="Han C."/>
            <person name="Tapia R."/>
            <person name="Schmutz J."/>
            <person name="Larimer F."/>
            <person name="Land M."/>
            <person name="Hauser L."/>
            <person name="Challacombe J.F."/>
            <person name="Green L."/>
            <person name="Lindler L.E."/>
            <person name="Nikolich M.P."/>
            <person name="Richardson P."/>
        </authorList>
    </citation>
    <scope>NUCLEOTIDE SEQUENCE [LARGE SCALE GENOMIC DNA]</scope>
    <source>
        <strain>PB1/+</strain>
    </source>
</reference>
<proteinExistence type="inferred from homology"/>
<feature type="chain" id="PRO_1000122177" description="Integration host factor subunit alpha">
    <location>
        <begin position="1"/>
        <end position="98"/>
    </location>
</feature>
<feature type="region of interest" description="Disordered" evidence="2">
    <location>
        <begin position="49"/>
        <end position="70"/>
    </location>
</feature>
<accession>B2K662</accession>
<comment type="function">
    <text evidence="1">This protein is one of the two subunits of integration host factor, a specific DNA-binding protein that functions in genetic recombination as well as in transcriptional and translational control.</text>
</comment>
<comment type="subunit">
    <text evidence="1">Heterodimer of an alpha and a beta chain.</text>
</comment>
<comment type="similarity">
    <text evidence="1">Belongs to the bacterial histone-like protein family.</text>
</comment>
<protein>
    <recommendedName>
        <fullName evidence="1">Integration host factor subunit alpha</fullName>
        <shortName evidence="1">IHF-alpha</shortName>
    </recommendedName>
</protein>
<keyword id="KW-0233">DNA recombination</keyword>
<keyword id="KW-0238">DNA-binding</keyword>
<keyword id="KW-0804">Transcription</keyword>
<keyword id="KW-0805">Transcription regulation</keyword>
<keyword id="KW-0810">Translation regulation</keyword>
<organism>
    <name type="scientific">Yersinia pseudotuberculosis serotype IB (strain PB1/+)</name>
    <dbReference type="NCBI Taxonomy" id="502801"/>
    <lineage>
        <taxon>Bacteria</taxon>
        <taxon>Pseudomonadati</taxon>
        <taxon>Pseudomonadota</taxon>
        <taxon>Gammaproteobacteria</taxon>
        <taxon>Enterobacterales</taxon>
        <taxon>Yersiniaceae</taxon>
        <taxon>Yersinia</taxon>
    </lineage>
</organism>
<dbReference type="EMBL" id="CP001048">
    <property type="protein sequence ID" value="ACC89371.1"/>
    <property type="molecule type" value="Genomic_DNA"/>
</dbReference>
<dbReference type="RefSeq" id="WP_002211830.1">
    <property type="nucleotide sequence ID" value="NZ_CP009780.1"/>
</dbReference>
<dbReference type="SMR" id="B2K662"/>
<dbReference type="GeneID" id="97456078"/>
<dbReference type="KEGG" id="ypb:YPTS_2410"/>
<dbReference type="PATRIC" id="fig|502801.10.peg.1816"/>
<dbReference type="GO" id="GO:0005829">
    <property type="term" value="C:cytosol"/>
    <property type="evidence" value="ECO:0007669"/>
    <property type="project" value="TreeGrafter"/>
</dbReference>
<dbReference type="GO" id="GO:0003677">
    <property type="term" value="F:DNA binding"/>
    <property type="evidence" value="ECO:0007669"/>
    <property type="project" value="UniProtKB-UniRule"/>
</dbReference>
<dbReference type="GO" id="GO:0030527">
    <property type="term" value="F:structural constituent of chromatin"/>
    <property type="evidence" value="ECO:0007669"/>
    <property type="project" value="InterPro"/>
</dbReference>
<dbReference type="GO" id="GO:0006310">
    <property type="term" value="P:DNA recombination"/>
    <property type="evidence" value="ECO:0007669"/>
    <property type="project" value="UniProtKB-UniRule"/>
</dbReference>
<dbReference type="GO" id="GO:0009893">
    <property type="term" value="P:positive regulation of metabolic process"/>
    <property type="evidence" value="ECO:0007669"/>
    <property type="project" value="UniProtKB-ARBA"/>
</dbReference>
<dbReference type="GO" id="GO:0006355">
    <property type="term" value="P:regulation of DNA-templated transcription"/>
    <property type="evidence" value="ECO:0007669"/>
    <property type="project" value="UniProtKB-UniRule"/>
</dbReference>
<dbReference type="GO" id="GO:0006417">
    <property type="term" value="P:regulation of translation"/>
    <property type="evidence" value="ECO:0007669"/>
    <property type="project" value="UniProtKB-UniRule"/>
</dbReference>
<dbReference type="CDD" id="cd13835">
    <property type="entry name" value="IHF_A"/>
    <property type="match status" value="1"/>
</dbReference>
<dbReference type="FunFam" id="4.10.520.10:FF:000002">
    <property type="entry name" value="Integration host factor subunit alpha"/>
    <property type="match status" value="1"/>
</dbReference>
<dbReference type="Gene3D" id="4.10.520.10">
    <property type="entry name" value="IHF-like DNA-binding proteins"/>
    <property type="match status" value="1"/>
</dbReference>
<dbReference type="HAMAP" id="MF_00380">
    <property type="entry name" value="IHF_alpha"/>
    <property type="match status" value="1"/>
</dbReference>
<dbReference type="InterPro" id="IPR000119">
    <property type="entry name" value="Hist_DNA-bd"/>
</dbReference>
<dbReference type="InterPro" id="IPR020816">
    <property type="entry name" value="Histone-like_DNA-bd_CS"/>
</dbReference>
<dbReference type="InterPro" id="IPR010992">
    <property type="entry name" value="IHF-like_DNA-bd_dom_sf"/>
</dbReference>
<dbReference type="InterPro" id="IPR005684">
    <property type="entry name" value="IHF_alpha"/>
</dbReference>
<dbReference type="NCBIfam" id="TIGR00987">
    <property type="entry name" value="himA"/>
    <property type="match status" value="1"/>
</dbReference>
<dbReference type="NCBIfam" id="NF001401">
    <property type="entry name" value="PRK00285.1"/>
    <property type="match status" value="1"/>
</dbReference>
<dbReference type="PANTHER" id="PTHR33175">
    <property type="entry name" value="DNA-BINDING PROTEIN HU"/>
    <property type="match status" value="1"/>
</dbReference>
<dbReference type="PANTHER" id="PTHR33175:SF2">
    <property type="entry name" value="INTEGRATION HOST FACTOR SUBUNIT ALPHA"/>
    <property type="match status" value="1"/>
</dbReference>
<dbReference type="Pfam" id="PF00216">
    <property type="entry name" value="Bac_DNA_binding"/>
    <property type="match status" value="1"/>
</dbReference>
<dbReference type="PRINTS" id="PR01727">
    <property type="entry name" value="DNABINDINGHU"/>
</dbReference>
<dbReference type="SMART" id="SM00411">
    <property type="entry name" value="BHL"/>
    <property type="match status" value="1"/>
</dbReference>
<dbReference type="SUPFAM" id="SSF47729">
    <property type="entry name" value="IHF-like DNA-binding proteins"/>
    <property type="match status" value="1"/>
</dbReference>
<dbReference type="PROSITE" id="PS00045">
    <property type="entry name" value="HISTONE_LIKE"/>
    <property type="match status" value="1"/>
</dbReference>